<proteinExistence type="inferred from homology"/>
<evidence type="ECO:0000255" key="1">
    <source>
        <dbReference type="HAMAP-Rule" id="MF_00211"/>
    </source>
</evidence>
<comment type="function">
    <text evidence="1">Catalyzes the transfer of the phosphoribosyl group of 5-phosphorylribose-1-pyrophosphate (PRPP) to anthranilate to yield N-(5'-phosphoribosyl)-anthranilate (PRA).</text>
</comment>
<comment type="catalytic activity">
    <reaction evidence="1">
        <text>N-(5-phospho-beta-D-ribosyl)anthranilate + diphosphate = 5-phospho-alpha-D-ribose 1-diphosphate + anthranilate</text>
        <dbReference type="Rhea" id="RHEA:11768"/>
        <dbReference type="ChEBI" id="CHEBI:16567"/>
        <dbReference type="ChEBI" id="CHEBI:18277"/>
        <dbReference type="ChEBI" id="CHEBI:33019"/>
        <dbReference type="ChEBI" id="CHEBI:58017"/>
        <dbReference type="EC" id="2.4.2.18"/>
    </reaction>
</comment>
<comment type="cofactor">
    <cofactor evidence="1">
        <name>Mg(2+)</name>
        <dbReference type="ChEBI" id="CHEBI:18420"/>
    </cofactor>
    <text evidence="1">Binds 2 magnesium ions per monomer.</text>
</comment>
<comment type="pathway">
    <text evidence="1">Amino-acid biosynthesis; L-tryptophan biosynthesis; L-tryptophan from chorismate: step 2/5.</text>
</comment>
<comment type="subunit">
    <text evidence="1">Homodimer.</text>
</comment>
<comment type="similarity">
    <text evidence="1">Belongs to the anthranilate phosphoribosyltransferase family.</text>
</comment>
<protein>
    <recommendedName>
        <fullName evidence="1">Anthranilate phosphoribosyltransferase</fullName>
        <ecNumber evidence="1">2.4.2.18</ecNumber>
    </recommendedName>
</protein>
<feature type="chain" id="PRO_0000154505" description="Anthranilate phosphoribosyltransferase">
    <location>
        <begin position="1"/>
        <end position="344"/>
    </location>
</feature>
<feature type="binding site" evidence="1">
    <location>
        <position position="84"/>
    </location>
    <ligand>
        <name>5-phospho-alpha-D-ribose 1-diphosphate</name>
        <dbReference type="ChEBI" id="CHEBI:58017"/>
    </ligand>
</feature>
<feature type="binding site" evidence="1">
    <location>
        <position position="84"/>
    </location>
    <ligand>
        <name>anthranilate</name>
        <dbReference type="ChEBI" id="CHEBI:16567"/>
        <label>1</label>
    </ligand>
</feature>
<feature type="binding site" evidence="1">
    <location>
        <begin position="87"/>
        <end position="88"/>
    </location>
    <ligand>
        <name>5-phospho-alpha-D-ribose 1-diphosphate</name>
        <dbReference type="ChEBI" id="CHEBI:58017"/>
    </ligand>
</feature>
<feature type="binding site" evidence="1">
    <location>
        <position position="92"/>
    </location>
    <ligand>
        <name>5-phospho-alpha-D-ribose 1-diphosphate</name>
        <dbReference type="ChEBI" id="CHEBI:58017"/>
    </ligand>
</feature>
<feature type="binding site" evidence="1">
    <location>
        <begin position="94"/>
        <end position="97"/>
    </location>
    <ligand>
        <name>5-phospho-alpha-D-ribose 1-diphosphate</name>
        <dbReference type="ChEBI" id="CHEBI:58017"/>
    </ligand>
</feature>
<feature type="binding site" evidence="1">
    <location>
        <position position="96"/>
    </location>
    <ligand>
        <name>Mg(2+)</name>
        <dbReference type="ChEBI" id="CHEBI:18420"/>
        <label>1</label>
    </ligand>
</feature>
<feature type="binding site" evidence="1">
    <location>
        <begin position="112"/>
        <end position="120"/>
    </location>
    <ligand>
        <name>5-phospho-alpha-D-ribose 1-diphosphate</name>
        <dbReference type="ChEBI" id="CHEBI:58017"/>
    </ligand>
</feature>
<feature type="binding site" evidence="1">
    <location>
        <position position="115"/>
    </location>
    <ligand>
        <name>anthranilate</name>
        <dbReference type="ChEBI" id="CHEBI:16567"/>
        <label>1</label>
    </ligand>
</feature>
<feature type="binding site" evidence="1">
    <location>
        <position position="124"/>
    </location>
    <ligand>
        <name>5-phospho-alpha-D-ribose 1-diphosphate</name>
        <dbReference type="ChEBI" id="CHEBI:58017"/>
    </ligand>
</feature>
<feature type="binding site" evidence="1">
    <location>
        <position position="170"/>
    </location>
    <ligand>
        <name>anthranilate</name>
        <dbReference type="ChEBI" id="CHEBI:16567"/>
        <label>2</label>
    </ligand>
</feature>
<feature type="binding site" evidence="1">
    <location>
        <position position="229"/>
    </location>
    <ligand>
        <name>Mg(2+)</name>
        <dbReference type="ChEBI" id="CHEBI:18420"/>
        <label>2</label>
    </ligand>
</feature>
<feature type="binding site" evidence="1">
    <location>
        <position position="230"/>
    </location>
    <ligand>
        <name>Mg(2+)</name>
        <dbReference type="ChEBI" id="CHEBI:18420"/>
        <label>1</label>
    </ligand>
</feature>
<feature type="binding site" evidence="1">
    <location>
        <position position="230"/>
    </location>
    <ligand>
        <name>Mg(2+)</name>
        <dbReference type="ChEBI" id="CHEBI:18420"/>
        <label>2</label>
    </ligand>
</feature>
<name>TRPD_XYLFT</name>
<gene>
    <name evidence="1" type="primary">trpD</name>
    <name type="ordered locus">PD_0172</name>
</gene>
<organism>
    <name type="scientific">Xylella fastidiosa (strain Temecula1 / ATCC 700964)</name>
    <dbReference type="NCBI Taxonomy" id="183190"/>
    <lineage>
        <taxon>Bacteria</taxon>
        <taxon>Pseudomonadati</taxon>
        <taxon>Pseudomonadota</taxon>
        <taxon>Gammaproteobacteria</taxon>
        <taxon>Lysobacterales</taxon>
        <taxon>Lysobacteraceae</taxon>
        <taxon>Xylella</taxon>
    </lineage>
</organism>
<accession>Q87EX3</accession>
<sequence length="344" mass="36650">MSMTAQKALQRIVEHREILQDEMVQLMRQIMNSEVSGIMVAAILAGLRVKKETVGEIAGAATVMREFSRKVNVQDRTHLVDIVGTGGDGWHTFNISTCAMFVAAAAGAKVAKHGNRSVSSKSGSADVLEALGASIELQPLEVAEAIGCIGVGFMFAPIHHPVMQVVSPVRREMGVRTIFNILGPLTNPADAPNILMGVFDPDLVGIQVHVLHKLGAERALVVCGRDGMDELSLGTTTLVGELRGGRVCEYEVSPEDYGMAVSPISNLRVESSAESREMLLNVLAGKPGPALDVVALNAGAALYVAGVAQDIGHGVALAREVIFNGRARNILNQYVAFTRRPRNV</sequence>
<dbReference type="EC" id="2.4.2.18" evidence="1"/>
<dbReference type="EMBL" id="AE009442">
    <property type="protein sequence ID" value="AAO28066.1"/>
    <property type="molecule type" value="Genomic_DNA"/>
</dbReference>
<dbReference type="RefSeq" id="WP_004572976.1">
    <property type="nucleotide sequence ID" value="NC_004556.1"/>
</dbReference>
<dbReference type="SMR" id="Q87EX3"/>
<dbReference type="GeneID" id="93903862"/>
<dbReference type="KEGG" id="xft:PD_0172"/>
<dbReference type="HOGENOM" id="CLU_034315_2_1_6"/>
<dbReference type="UniPathway" id="UPA00035">
    <property type="reaction ID" value="UER00041"/>
</dbReference>
<dbReference type="Proteomes" id="UP000002516">
    <property type="component" value="Chromosome"/>
</dbReference>
<dbReference type="GO" id="GO:0005829">
    <property type="term" value="C:cytosol"/>
    <property type="evidence" value="ECO:0007669"/>
    <property type="project" value="TreeGrafter"/>
</dbReference>
<dbReference type="GO" id="GO:0004048">
    <property type="term" value="F:anthranilate phosphoribosyltransferase activity"/>
    <property type="evidence" value="ECO:0007669"/>
    <property type="project" value="UniProtKB-UniRule"/>
</dbReference>
<dbReference type="GO" id="GO:0000287">
    <property type="term" value="F:magnesium ion binding"/>
    <property type="evidence" value="ECO:0007669"/>
    <property type="project" value="UniProtKB-UniRule"/>
</dbReference>
<dbReference type="GO" id="GO:0000162">
    <property type="term" value="P:L-tryptophan biosynthetic process"/>
    <property type="evidence" value="ECO:0007669"/>
    <property type="project" value="UniProtKB-UniRule"/>
</dbReference>
<dbReference type="FunFam" id="3.40.1030.10:FF:000002">
    <property type="entry name" value="Anthranilate phosphoribosyltransferase"/>
    <property type="match status" value="1"/>
</dbReference>
<dbReference type="Gene3D" id="3.40.1030.10">
    <property type="entry name" value="Nucleoside phosphorylase/phosphoribosyltransferase catalytic domain"/>
    <property type="match status" value="1"/>
</dbReference>
<dbReference type="Gene3D" id="1.20.970.10">
    <property type="entry name" value="Transferase, Pyrimidine Nucleoside Phosphorylase, Chain C"/>
    <property type="match status" value="1"/>
</dbReference>
<dbReference type="HAMAP" id="MF_00211">
    <property type="entry name" value="TrpD"/>
    <property type="match status" value="1"/>
</dbReference>
<dbReference type="InterPro" id="IPR005940">
    <property type="entry name" value="Anthranilate_Pribosyl_Tfrase"/>
</dbReference>
<dbReference type="InterPro" id="IPR000312">
    <property type="entry name" value="Glycosyl_Trfase_fam3"/>
</dbReference>
<dbReference type="InterPro" id="IPR017459">
    <property type="entry name" value="Glycosyl_Trfase_fam3_N_dom"/>
</dbReference>
<dbReference type="InterPro" id="IPR036320">
    <property type="entry name" value="Glycosyl_Trfase_fam3_N_dom_sf"/>
</dbReference>
<dbReference type="InterPro" id="IPR035902">
    <property type="entry name" value="Nuc_phospho_transferase"/>
</dbReference>
<dbReference type="NCBIfam" id="TIGR01245">
    <property type="entry name" value="trpD"/>
    <property type="match status" value="1"/>
</dbReference>
<dbReference type="PANTHER" id="PTHR43285">
    <property type="entry name" value="ANTHRANILATE PHOSPHORIBOSYLTRANSFERASE"/>
    <property type="match status" value="1"/>
</dbReference>
<dbReference type="PANTHER" id="PTHR43285:SF2">
    <property type="entry name" value="ANTHRANILATE PHOSPHORIBOSYLTRANSFERASE"/>
    <property type="match status" value="1"/>
</dbReference>
<dbReference type="Pfam" id="PF02885">
    <property type="entry name" value="Glycos_trans_3N"/>
    <property type="match status" value="1"/>
</dbReference>
<dbReference type="Pfam" id="PF00591">
    <property type="entry name" value="Glycos_transf_3"/>
    <property type="match status" value="1"/>
</dbReference>
<dbReference type="SUPFAM" id="SSF52418">
    <property type="entry name" value="Nucleoside phosphorylase/phosphoribosyltransferase catalytic domain"/>
    <property type="match status" value="1"/>
</dbReference>
<dbReference type="SUPFAM" id="SSF47648">
    <property type="entry name" value="Nucleoside phosphorylase/phosphoribosyltransferase N-terminal domain"/>
    <property type="match status" value="1"/>
</dbReference>
<keyword id="KW-0028">Amino-acid biosynthesis</keyword>
<keyword id="KW-0057">Aromatic amino acid biosynthesis</keyword>
<keyword id="KW-0328">Glycosyltransferase</keyword>
<keyword id="KW-0460">Magnesium</keyword>
<keyword id="KW-0479">Metal-binding</keyword>
<keyword id="KW-1185">Reference proteome</keyword>
<keyword id="KW-0808">Transferase</keyword>
<keyword id="KW-0822">Tryptophan biosynthesis</keyword>
<reference key="1">
    <citation type="journal article" date="2003" name="J. Bacteriol.">
        <title>Comparative analyses of the complete genome sequences of Pierce's disease and citrus variegated chlorosis strains of Xylella fastidiosa.</title>
        <authorList>
            <person name="Van Sluys M.A."/>
            <person name="de Oliveira M.C."/>
            <person name="Monteiro-Vitorello C.B."/>
            <person name="Miyaki C.Y."/>
            <person name="Furlan L.R."/>
            <person name="Camargo L.E.A."/>
            <person name="da Silva A.C.R."/>
            <person name="Moon D.H."/>
            <person name="Takita M.A."/>
            <person name="Lemos E.G.M."/>
            <person name="Machado M.A."/>
            <person name="Ferro M.I.T."/>
            <person name="da Silva F.R."/>
            <person name="Goldman M.H.S."/>
            <person name="Goldman G.H."/>
            <person name="Lemos M.V.F."/>
            <person name="El-Dorry H."/>
            <person name="Tsai S.M."/>
            <person name="Carrer H."/>
            <person name="Carraro D.M."/>
            <person name="de Oliveira R.C."/>
            <person name="Nunes L.R."/>
            <person name="Siqueira W.J."/>
            <person name="Coutinho L.L."/>
            <person name="Kimura E.T."/>
            <person name="Ferro E.S."/>
            <person name="Harakava R."/>
            <person name="Kuramae E.E."/>
            <person name="Marino C.L."/>
            <person name="Giglioti E."/>
            <person name="Abreu I.L."/>
            <person name="Alves L.M.C."/>
            <person name="do Amaral A.M."/>
            <person name="Baia G.S."/>
            <person name="Blanco S.R."/>
            <person name="Brito M.S."/>
            <person name="Cannavan F.S."/>
            <person name="Celestino A.V."/>
            <person name="da Cunha A.F."/>
            <person name="Fenille R.C."/>
            <person name="Ferro J.A."/>
            <person name="Formighieri E.F."/>
            <person name="Kishi L.T."/>
            <person name="Leoni S.G."/>
            <person name="Oliveira A.R."/>
            <person name="Rosa V.E. Jr."/>
            <person name="Sassaki F.T."/>
            <person name="Sena J.A.D."/>
            <person name="de Souza A.A."/>
            <person name="Truffi D."/>
            <person name="Tsukumo F."/>
            <person name="Yanai G.M."/>
            <person name="Zaros L.G."/>
            <person name="Civerolo E.L."/>
            <person name="Simpson A.J.G."/>
            <person name="Almeida N.F. Jr."/>
            <person name="Setubal J.C."/>
            <person name="Kitajima J.P."/>
        </authorList>
    </citation>
    <scope>NUCLEOTIDE SEQUENCE [LARGE SCALE GENOMIC DNA]</scope>
    <source>
        <strain>Temecula1 / ATCC 700964</strain>
    </source>
</reference>